<reference key="1">
    <citation type="journal article" date="2006" name="Genome Res.">
        <title>Skewed genomic variability in strains of the toxigenic bacterial pathogen, Clostridium perfringens.</title>
        <authorList>
            <person name="Myers G.S.A."/>
            <person name="Rasko D.A."/>
            <person name="Cheung J.K."/>
            <person name="Ravel J."/>
            <person name="Seshadri R."/>
            <person name="DeBoy R.T."/>
            <person name="Ren Q."/>
            <person name="Varga J."/>
            <person name="Awad M.M."/>
            <person name="Brinkac L.M."/>
            <person name="Daugherty S.C."/>
            <person name="Haft D.H."/>
            <person name="Dodson R.J."/>
            <person name="Madupu R."/>
            <person name="Nelson W.C."/>
            <person name="Rosovitz M.J."/>
            <person name="Sullivan S.A."/>
            <person name="Khouri H."/>
            <person name="Dimitrov G.I."/>
            <person name="Watkins K.L."/>
            <person name="Mulligan S."/>
            <person name="Benton J."/>
            <person name="Radune D."/>
            <person name="Fisher D.J."/>
            <person name="Atkins H.S."/>
            <person name="Hiscox T."/>
            <person name="Jost B.H."/>
            <person name="Billington S.J."/>
            <person name="Songer J.G."/>
            <person name="McClane B.A."/>
            <person name="Titball R.W."/>
            <person name="Rood J.I."/>
            <person name="Melville S.B."/>
            <person name="Paulsen I.T."/>
        </authorList>
    </citation>
    <scope>NUCLEOTIDE SEQUENCE [LARGE SCALE GENOMIC DNA]</scope>
    <source>
        <strain>SM101 / Type A</strain>
    </source>
</reference>
<feature type="chain" id="PRO_0000264023" description="Peptidyl-tRNA hydrolase">
    <location>
        <begin position="1"/>
        <end position="188"/>
    </location>
</feature>
<feature type="active site" description="Proton acceptor" evidence="1">
    <location>
        <position position="19"/>
    </location>
</feature>
<feature type="binding site" evidence="1">
    <location>
        <position position="14"/>
    </location>
    <ligand>
        <name>tRNA</name>
        <dbReference type="ChEBI" id="CHEBI:17843"/>
    </ligand>
</feature>
<feature type="binding site" evidence="1">
    <location>
        <position position="64"/>
    </location>
    <ligand>
        <name>tRNA</name>
        <dbReference type="ChEBI" id="CHEBI:17843"/>
    </ligand>
</feature>
<feature type="binding site" evidence="1">
    <location>
        <position position="66"/>
    </location>
    <ligand>
        <name>tRNA</name>
        <dbReference type="ChEBI" id="CHEBI:17843"/>
    </ligand>
</feature>
<feature type="binding site" evidence="1">
    <location>
        <position position="112"/>
    </location>
    <ligand>
        <name>tRNA</name>
        <dbReference type="ChEBI" id="CHEBI:17843"/>
    </ligand>
</feature>
<feature type="site" description="Discriminates between blocked and unblocked aminoacyl-tRNA" evidence="1">
    <location>
        <position position="9"/>
    </location>
</feature>
<feature type="site" description="Stabilizes the basic form of H active site to accept a proton" evidence="1">
    <location>
        <position position="91"/>
    </location>
</feature>
<accession>Q0SQ66</accession>
<keyword id="KW-0963">Cytoplasm</keyword>
<keyword id="KW-0378">Hydrolase</keyword>
<keyword id="KW-0694">RNA-binding</keyword>
<keyword id="KW-0820">tRNA-binding</keyword>
<organism>
    <name type="scientific">Clostridium perfringens (strain SM101 / Type A)</name>
    <dbReference type="NCBI Taxonomy" id="289380"/>
    <lineage>
        <taxon>Bacteria</taxon>
        <taxon>Bacillati</taxon>
        <taxon>Bacillota</taxon>
        <taxon>Clostridia</taxon>
        <taxon>Eubacteriales</taxon>
        <taxon>Clostridiaceae</taxon>
        <taxon>Clostridium</taxon>
    </lineage>
</organism>
<sequence>MILIVGLGNPGKQYEKTRHNIGFDVIDYMANKYNIDVNREKFKGICGEGFIENKKVILLKPLTYMNLSGESIREFVNFYKLEDDEIIVVYDDISLDIGRLRIREKGSAGGHNGIKSIIQNLGGDKFPRVKVGVGQPKDNLVNHVLGKFSKEDREHIEKVIPVVSDAIVEIVKNDAKESMNKFNGVNIE</sequence>
<evidence type="ECO:0000255" key="1">
    <source>
        <dbReference type="HAMAP-Rule" id="MF_00083"/>
    </source>
</evidence>
<comment type="function">
    <text evidence="1">Hydrolyzes ribosome-free peptidyl-tRNAs (with 1 or more amino acids incorporated), which drop off the ribosome during protein synthesis, or as a result of ribosome stalling.</text>
</comment>
<comment type="function">
    <text evidence="1">Catalyzes the release of premature peptidyl moieties from peptidyl-tRNA molecules trapped in stalled 50S ribosomal subunits, and thus maintains levels of free tRNAs and 50S ribosomes.</text>
</comment>
<comment type="catalytic activity">
    <reaction evidence="1">
        <text>an N-acyl-L-alpha-aminoacyl-tRNA + H2O = an N-acyl-L-amino acid + a tRNA + H(+)</text>
        <dbReference type="Rhea" id="RHEA:54448"/>
        <dbReference type="Rhea" id="RHEA-COMP:10123"/>
        <dbReference type="Rhea" id="RHEA-COMP:13883"/>
        <dbReference type="ChEBI" id="CHEBI:15377"/>
        <dbReference type="ChEBI" id="CHEBI:15378"/>
        <dbReference type="ChEBI" id="CHEBI:59874"/>
        <dbReference type="ChEBI" id="CHEBI:78442"/>
        <dbReference type="ChEBI" id="CHEBI:138191"/>
        <dbReference type="EC" id="3.1.1.29"/>
    </reaction>
</comment>
<comment type="subunit">
    <text evidence="1">Monomer.</text>
</comment>
<comment type="subcellular location">
    <subcellularLocation>
        <location evidence="1">Cytoplasm</location>
    </subcellularLocation>
</comment>
<comment type="similarity">
    <text evidence="1">Belongs to the PTH family.</text>
</comment>
<protein>
    <recommendedName>
        <fullName evidence="1">Peptidyl-tRNA hydrolase</fullName>
        <shortName evidence="1">Pth</shortName>
        <ecNumber evidence="1">3.1.1.29</ecNumber>
    </recommendedName>
</protein>
<name>PTH_CLOPS</name>
<proteinExistence type="inferred from homology"/>
<gene>
    <name evidence="1" type="primary">pth</name>
    <name type="ordered locus">CPR_2494</name>
</gene>
<dbReference type="EC" id="3.1.1.29" evidence="1"/>
<dbReference type="EMBL" id="CP000312">
    <property type="protein sequence ID" value="ABG86883.1"/>
    <property type="molecule type" value="Genomic_DNA"/>
</dbReference>
<dbReference type="RefSeq" id="WP_011593188.1">
    <property type="nucleotide sequence ID" value="NC_008262.1"/>
</dbReference>
<dbReference type="SMR" id="Q0SQ66"/>
<dbReference type="KEGG" id="cpr:CPR_2494"/>
<dbReference type="Proteomes" id="UP000001824">
    <property type="component" value="Chromosome"/>
</dbReference>
<dbReference type="GO" id="GO:0005737">
    <property type="term" value="C:cytoplasm"/>
    <property type="evidence" value="ECO:0007669"/>
    <property type="project" value="UniProtKB-SubCell"/>
</dbReference>
<dbReference type="GO" id="GO:0004045">
    <property type="term" value="F:peptidyl-tRNA hydrolase activity"/>
    <property type="evidence" value="ECO:0007669"/>
    <property type="project" value="UniProtKB-UniRule"/>
</dbReference>
<dbReference type="GO" id="GO:0000049">
    <property type="term" value="F:tRNA binding"/>
    <property type="evidence" value="ECO:0007669"/>
    <property type="project" value="UniProtKB-UniRule"/>
</dbReference>
<dbReference type="GO" id="GO:0006515">
    <property type="term" value="P:protein quality control for misfolded or incompletely synthesized proteins"/>
    <property type="evidence" value="ECO:0007669"/>
    <property type="project" value="UniProtKB-UniRule"/>
</dbReference>
<dbReference type="GO" id="GO:0072344">
    <property type="term" value="P:rescue of stalled ribosome"/>
    <property type="evidence" value="ECO:0007669"/>
    <property type="project" value="UniProtKB-UniRule"/>
</dbReference>
<dbReference type="CDD" id="cd00462">
    <property type="entry name" value="PTH"/>
    <property type="match status" value="1"/>
</dbReference>
<dbReference type="FunFam" id="3.40.50.1470:FF:000001">
    <property type="entry name" value="Peptidyl-tRNA hydrolase"/>
    <property type="match status" value="1"/>
</dbReference>
<dbReference type="Gene3D" id="3.40.50.1470">
    <property type="entry name" value="Peptidyl-tRNA hydrolase"/>
    <property type="match status" value="1"/>
</dbReference>
<dbReference type="HAMAP" id="MF_00083">
    <property type="entry name" value="Pept_tRNA_hydro_bact"/>
    <property type="match status" value="1"/>
</dbReference>
<dbReference type="InterPro" id="IPR001328">
    <property type="entry name" value="Pept_tRNA_hydro"/>
</dbReference>
<dbReference type="InterPro" id="IPR018171">
    <property type="entry name" value="Pept_tRNA_hydro_CS"/>
</dbReference>
<dbReference type="InterPro" id="IPR036416">
    <property type="entry name" value="Pept_tRNA_hydro_sf"/>
</dbReference>
<dbReference type="NCBIfam" id="TIGR00447">
    <property type="entry name" value="pth"/>
    <property type="match status" value="1"/>
</dbReference>
<dbReference type="PANTHER" id="PTHR17224">
    <property type="entry name" value="PEPTIDYL-TRNA HYDROLASE"/>
    <property type="match status" value="1"/>
</dbReference>
<dbReference type="PANTHER" id="PTHR17224:SF1">
    <property type="entry name" value="PEPTIDYL-TRNA HYDROLASE"/>
    <property type="match status" value="1"/>
</dbReference>
<dbReference type="Pfam" id="PF01195">
    <property type="entry name" value="Pept_tRNA_hydro"/>
    <property type="match status" value="1"/>
</dbReference>
<dbReference type="SUPFAM" id="SSF53178">
    <property type="entry name" value="Peptidyl-tRNA hydrolase-like"/>
    <property type="match status" value="1"/>
</dbReference>
<dbReference type="PROSITE" id="PS01195">
    <property type="entry name" value="PEPT_TRNA_HYDROL_1"/>
    <property type="match status" value="1"/>
</dbReference>
<dbReference type="PROSITE" id="PS01196">
    <property type="entry name" value="PEPT_TRNA_HYDROL_2"/>
    <property type="match status" value="1"/>
</dbReference>